<name>NFI_SHIF8</name>
<accession>Q0SY02</accession>
<keyword id="KW-0963">Cytoplasm</keyword>
<keyword id="KW-0227">DNA damage</keyword>
<keyword id="KW-0234">DNA repair</keyword>
<keyword id="KW-0255">Endonuclease</keyword>
<keyword id="KW-0378">Hydrolase</keyword>
<keyword id="KW-0460">Magnesium</keyword>
<keyword id="KW-0479">Metal-binding</keyword>
<keyword id="KW-0540">Nuclease</keyword>
<organism>
    <name type="scientific">Shigella flexneri serotype 5b (strain 8401)</name>
    <dbReference type="NCBI Taxonomy" id="373384"/>
    <lineage>
        <taxon>Bacteria</taxon>
        <taxon>Pseudomonadati</taxon>
        <taxon>Pseudomonadota</taxon>
        <taxon>Gammaproteobacteria</taxon>
        <taxon>Enterobacterales</taxon>
        <taxon>Enterobacteriaceae</taxon>
        <taxon>Shigella</taxon>
    </lineage>
</organism>
<reference key="1">
    <citation type="journal article" date="2006" name="BMC Genomics">
        <title>Complete genome sequence of Shigella flexneri 5b and comparison with Shigella flexneri 2a.</title>
        <authorList>
            <person name="Nie H."/>
            <person name="Yang F."/>
            <person name="Zhang X."/>
            <person name="Yang J."/>
            <person name="Chen L."/>
            <person name="Wang J."/>
            <person name="Xiong Z."/>
            <person name="Peng J."/>
            <person name="Sun L."/>
            <person name="Dong J."/>
            <person name="Xue Y."/>
            <person name="Xu X."/>
            <person name="Chen S."/>
            <person name="Yao Z."/>
            <person name="Shen Y."/>
            <person name="Jin Q."/>
        </authorList>
    </citation>
    <scope>NUCLEOTIDE SEQUENCE [LARGE SCALE GENOMIC DNA]</scope>
    <source>
        <strain>8401</strain>
    </source>
</reference>
<evidence type="ECO:0000255" key="1">
    <source>
        <dbReference type="HAMAP-Rule" id="MF_00801"/>
    </source>
</evidence>
<sequence length="223" mass="24619">MDLASLRAQQIELASSVICEDRLDKDPPDLIAGADVGFEQGGEVTRAAMVLLKYPSLELVEYKVARIATTMPYIPGFLSFREYPALLAAWEMLSQKPDLVFVDGHGISHPRRLGVASHFGLLVDVPTIGVAKKRLCGKFEPLSSKPGALAPLMDKGEQLAWVWRSKARCNPLFIATGHRVSVDSALAWVQRCMKGYRLPEPTRWADAVASERPAFVRYTANQP</sequence>
<protein>
    <recommendedName>
        <fullName evidence="1">Endonuclease V</fullName>
        <ecNumber evidence="1">3.1.21.7</ecNumber>
    </recommendedName>
    <alternativeName>
        <fullName evidence="1">Deoxyinosine 3'endonuclease</fullName>
    </alternativeName>
    <alternativeName>
        <fullName evidence="1">Deoxyribonuclease V</fullName>
        <shortName evidence="1">DNase V</shortName>
    </alternativeName>
</protein>
<comment type="function">
    <text evidence="1">DNA repair enzyme involved in the repair of deaminated bases. Selectively cleaves double-stranded DNA at the second phosphodiester bond 3' to a deoxyinosine leaving behind the intact lesion on the nicked DNA.</text>
</comment>
<comment type="catalytic activity">
    <reaction evidence="1">
        <text>Endonucleolytic cleavage at apurinic or apyrimidinic sites to products with a 5'-phosphate.</text>
        <dbReference type="EC" id="3.1.21.7"/>
    </reaction>
</comment>
<comment type="cofactor">
    <cofactor evidence="1">
        <name>Mg(2+)</name>
        <dbReference type="ChEBI" id="CHEBI:18420"/>
    </cofactor>
</comment>
<comment type="subcellular location">
    <subcellularLocation>
        <location evidence="1">Cytoplasm</location>
    </subcellularLocation>
</comment>
<comment type="similarity">
    <text evidence="1">Belongs to the endonuclease V family.</text>
</comment>
<proteinExistence type="inferred from homology"/>
<gene>
    <name evidence="1" type="primary">nfi</name>
    <name type="ordered locus">SFV_4070</name>
</gene>
<feature type="chain" id="PRO_1000047002" description="Endonuclease V">
    <location>
        <begin position="1"/>
        <end position="223"/>
    </location>
</feature>
<feature type="binding site" evidence="1">
    <location>
        <position position="35"/>
    </location>
    <ligand>
        <name>Mg(2+)</name>
        <dbReference type="ChEBI" id="CHEBI:18420"/>
    </ligand>
</feature>
<feature type="binding site" evidence="1">
    <location>
        <position position="103"/>
    </location>
    <ligand>
        <name>Mg(2+)</name>
        <dbReference type="ChEBI" id="CHEBI:18420"/>
    </ligand>
</feature>
<feature type="site" description="Interaction with target DNA" evidence="1">
    <location>
        <position position="73"/>
    </location>
</feature>
<dbReference type="EC" id="3.1.21.7" evidence="1"/>
<dbReference type="EMBL" id="CP000266">
    <property type="protein sequence ID" value="ABF06063.1"/>
    <property type="molecule type" value="Genomic_DNA"/>
</dbReference>
<dbReference type="RefSeq" id="WP_000362374.1">
    <property type="nucleotide sequence ID" value="NC_008258.1"/>
</dbReference>
<dbReference type="SMR" id="Q0SY02"/>
<dbReference type="KEGG" id="sfv:SFV_4070"/>
<dbReference type="HOGENOM" id="CLU_047631_1_0_6"/>
<dbReference type="Proteomes" id="UP000000659">
    <property type="component" value="Chromosome"/>
</dbReference>
<dbReference type="GO" id="GO:0005737">
    <property type="term" value="C:cytoplasm"/>
    <property type="evidence" value="ECO:0007669"/>
    <property type="project" value="UniProtKB-SubCell"/>
</dbReference>
<dbReference type="GO" id="GO:0043737">
    <property type="term" value="F:deoxyribonuclease V activity"/>
    <property type="evidence" value="ECO:0007669"/>
    <property type="project" value="UniProtKB-UniRule"/>
</dbReference>
<dbReference type="GO" id="GO:0000287">
    <property type="term" value="F:magnesium ion binding"/>
    <property type="evidence" value="ECO:0007669"/>
    <property type="project" value="UniProtKB-UniRule"/>
</dbReference>
<dbReference type="GO" id="GO:0016891">
    <property type="term" value="F:RNA endonuclease activity, producing 5'-phosphomonoesters"/>
    <property type="evidence" value="ECO:0007669"/>
    <property type="project" value="TreeGrafter"/>
</dbReference>
<dbReference type="GO" id="GO:0003727">
    <property type="term" value="F:single-stranded RNA binding"/>
    <property type="evidence" value="ECO:0007669"/>
    <property type="project" value="TreeGrafter"/>
</dbReference>
<dbReference type="GO" id="GO:0006281">
    <property type="term" value="P:DNA repair"/>
    <property type="evidence" value="ECO:0007669"/>
    <property type="project" value="UniProtKB-UniRule"/>
</dbReference>
<dbReference type="CDD" id="cd06559">
    <property type="entry name" value="Endonuclease_V"/>
    <property type="match status" value="1"/>
</dbReference>
<dbReference type="FunFam" id="3.30.2170.10:FF:000001">
    <property type="entry name" value="Endonuclease V"/>
    <property type="match status" value="1"/>
</dbReference>
<dbReference type="Gene3D" id="3.30.2170.10">
    <property type="entry name" value="archaeoglobus fulgidus dsm 4304 superfamily"/>
    <property type="match status" value="1"/>
</dbReference>
<dbReference type="HAMAP" id="MF_00801">
    <property type="entry name" value="Endonuclease_5"/>
    <property type="match status" value="1"/>
</dbReference>
<dbReference type="InterPro" id="IPR007581">
    <property type="entry name" value="Endonuclease-V"/>
</dbReference>
<dbReference type="NCBIfam" id="NF008629">
    <property type="entry name" value="PRK11617.1"/>
    <property type="match status" value="1"/>
</dbReference>
<dbReference type="PANTHER" id="PTHR28511">
    <property type="entry name" value="ENDONUCLEASE V"/>
    <property type="match status" value="1"/>
</dbReference>
<dbReference type="PANTHER" id="PTHR28511:SF1">
    <property type="entry name" value="ENDONUCLEASE V"/>
    <property type="match status" value="1"/>
</dbReference>
<dbReference type="Pfam" id="PF04493">
    <property type="entry name" value="Endonuclease_5"/>
    <property type="match status" value="1"/>
</dbReference>